<feature type="chain" id="PRO_1000117302" description="Thiamine-phosphate synthase">
    <location>
        <begin position="1"/>
        <end position="207"/>
    </location>
</feature>
<feature type="binding site" evidence="1">
    <location>
        <begin position="36"/>
        <end position="40"/>
    </location>
    <ligand>
        <name>4-amino-2-methyl-5-(diphosphooxymethyl)pyrimidine</name>
        <dbReference type="ChEBI" id="CHEBI:57841"/>
    </ligand>
</feature>
<feature type="binding site" evidence="1">
    <location>
        <position position="68"/>
    </location>
    <ligand>
        <name>4-amino-2-methyl-5-(diphosphooxymethyl)pyrimidine</name>
        <dbReference type="ChEBI" id="CHEBI:57841"/>
    </ligand>
</feature>
<feature type="binding site" evidence="1">
    <location>
        <position position="69"/>
    </location>
    <ligand>
        <name>Mg(2+)</name>
        <dbReference type="ChEBI" id="CHEBI:18420"/>
    </ligand>
</feature>
<feature type="binding site" evidence="1">
    <location>
        <position position="88"/>
    </location>
    <ligand>
        <name>Mg(2+)</name>
        <dbReference type="ChEBI" id="CHEBI:18420"/>
    </ligand>
</feature>
<feature type="binding site" evidence="1">
    <location>
        <position position="107"/>
    </location>
    <ligand>
        <name>4-amino-2-methyl-5-(diphosphooxymethyl)pyrimidine</name>
        <dbReference type="ChEBI" id="CHEBI:57841"/>
    </ligand>
</feature>
<feature type="binding site" evidence="1">
    <location>
        <begin position="134"/>
        <end position="136"/>
    </location>
    <ligand>
        <name>2-[(2R,5Z)-2-carboxy-4-methylthiazol-5(2H)-ylidene]ethyl phosphate</name>
        <dbReference type="ChEBI" id="CHEBI:62899"/>
    </ligand>
</feature>
<feature type="binding site" evidence="1">
    <location>
        <position position="137"/>
    </location>
    <ligand>
        <name>4-amino-2-methyl-5-(diphosphooxymethyl)pyrimidine</name>
        <dbReference type="ChEBI" id="CHEBI:57841"/>
    </ligand>
</feature>
<feature type="binding site" evidence="1">
    <location>
        <position position="164"/>
    </location>
    <ligand>
        <name>2-[(2R,5Z)-2-carboxy-4-methylthiazol-5(2H)-ylidene]ethyl phosphate</name>
        <dbReference type="ChEBI" id="CHEBI:62899"/>
    </ligand>
</feature>
<proteinExistence type="inferred from homology"/>
<organism>
    <name type="scientific">Rhodospirillum centenum (strain ATCC 51521 / SW)</name>
    <dbReference type="NCBI Taxonomy" id="414684"/>
    <lineage>
        <taxon>Bacteria</taxon>
        <taxon>Pseudomonadati</taxon>
        <taxon>Pseudomonadota</taxon>
        <taxon>Alphaproteobacteria</taxon>
        <taxon>Rhodospirillales</taxon>
        <taxon>Rhodospirillaceae</taxon>
        <taxon>Rhodospirillum</taxon>
    </lineage>
</organism>
<protein>
    <recommendedName>
        <fullName evidence="1">Thiamine-phosphate synthase</fullName>
        <shortName evidence="1">TP synthase</shortName>
        <shortName evidence="1">TPS</shortName>
        <ecNumber evidence="1">2.5.1.3</ecNumber>
    </recommendedName>
    <alternativeName>
        <fullName evidence="1">Thiamine-phosphate pyrophosphorylase</fullName>
        <shortName evidence="1">TMP pyrophosphorylase</shortName>
        <shortName evidence="1">TMP-PPase</shortName>
    </alternativeName>
</protein>
<name>THIE_RHOCS</name>
<sequence length="207" mass="21998">MTDCRLYLITPPAFDPQAFAPTLAAALDAGDVACVQLRLKDAPDEAILRAVEVLRPLVQARDVAFILNDRPDLAARSGCDGVHVGQEDTPYREARRLVGADAIVGVTCHDSRHLAMVAGEEGADYVAFGAFFPTGTKEPKTTADPEILTWWQEMMEVPCVAIGGITVETAPLLVQAGADFLAVCGGVWNHPAGPAAAVADFNRVMRG</sequence>
<accession>B6INN5</accession>
<keyword id="KW-0460">Magnesium</keyword>
<keyword id="KW-0479">Metal-binding</keyword>
<keyword id="KW-1185">Reference proteome</keyword>
<keyword id="KW-0784">Thiamine biosynthesis</keyword>
<keyword id="KW-0808">Transferase</keyword>
<dbReference type="EC" id="2.5.1.3" evidence="1"/>
<dbReference type="EMBL" id="CP000613">
    <property type="protein sequence ID" value="ACI99219.1"/>
    <property type="molecule type" value="Genomic_DNA"/>
</dbReference>
<dbReference type="RefSeq" id="WP_012567004.1">
    <property type="nucleotide sequence ID" value="NC_011420.2"/>
</dbReference>
<dbReference type="SMR" id="B6INN5"/>
<dbReference type="STRING" id="414684.RC1_1824"/>
<dbReference type="KEGG" id="rce:RC1_1824"/>
<dbReference type="eggNOG" id="COG0352">
    <property type="taxonomic scope" value="Bacteria"/>
</dbReference>
<dbReference type="HOGENOM" id="CLU_018272_3_1_5"/>
<dbReference type="OrthoDB" id="7159061at2"/>
<dbReference type="UniPathway" id="UPA00060">
    <property type="reaction ID" value="UER00141"/>
</dbReference>
<dbReference type="Proteomes" id="UP000001591">
    <property type="component" value="Chromosome"/>
</dbReference>
<dbReference type="GO" id="GO:0005737">
    <property type="term" value="C:cytoplasm"/>
    <property type="evidence" value="ECO:0007669"/>
    <property type="project" value="TreeGrafter"/>
</dbReference>
<dbReference type="GO" id="GO:0000287">
    <property type="term" value="F:magnesium ion binding"/>
    <property type="evidence" value="ECO:0007669"/>
    <property type="project" value="UniProtKB-UniRule"/>
</dbReference>
<dbReference type="GO" id="GO:0004789">
    <property type="term" value="F:thiamine-phosphate diphosphorylase activity"/>
    <property type="evidence" value="ECO:0007669"/>
    <property type="project" value="UniProtKB-UniRule"/>
</dbReference>
<dbReference type="GO" id="GO:0009228">
    <property type="term" value="P:thiamine biosynthetic process"/>
    <property type="evidence" value="ECO:0007669"/>
    <property type="project" value="UniProtKB-KW"/>
</dbReference>
<dbReference type="GO" id="GO:0009229">
    <property type="term" value="P:thiamine diphosphate biosynthetic process"/>
    <property type="evidence" value="ECO:0007669"/>
    <property type="project" value="UniProtKB-UniRule"/>
</dbReference>
<dbReference type="CDD" id="cd00564">
    <property type="entry name" value="TMP_TenI"/>
    <property type="match status" value="1"/>
</dbReference>
<dbReference type="Gene3D" id="3.20.20.70">
    <property type="entry name" value="Aldolase class I"/>
    <property type="match status" value="1"/>
</dbReference>
<dbReference type="HAMAP" id="MF_00097">
    <property type="entry name" value="TMP_synthase"/>
    <property type="match status" value="1"/>
</dbReference>
<dbReference type="InterPro" id="IPR013785">
    <property type="entry name" value="Aldolase_TIM"/>
</dbReference>
<dbReference type="InterPro" id="IPR036206">
    <property type="entry name" value="ThiamineP_synth_sf"/>
</dbReference>
<dbReference type="InterPro" id="IPR022998">
    <property type="entry name" value="ThiamineP_synth_TenI"/>
</dbReference>
<dbReference type="InterPro" id="IPR034291">
    <property type="entry name" value="TMP_synthase"/>
</dbReference>
<dbReference type="NCBIfam" id="TIGR00693">
    <property type="entry name" value="thiE"/>
    <property type="match status" value="1"/>
</dbReference>
<dbReference type="PANTHER" id="PTHR20857">
    <property type="entry name" value="THIAMINE-PHOSPHATE PYROPHOSPHORYLASE"/>
    <property type="match status" value="1"/>
</dbReference>
<dbReference type="PANTHER" id="PTHR20857:SF15">
    <property type="entry name" value="THIAMINE-PHOSPHATE SYNTHASE"/>
    <property type="match status" value="1"/>
</dbReference>
<dbReference type="Pfam" id="PF02581">
    <property type="entry name" value="TMP-TENI"/>
    <property type="match status" value="1"/>
</dbReference>
<dbReference type="SUPFAM" id="SSF51391">
    <property type="entry name" value="Thiamin phosphate synthase"/>
    <property type="match status" value="1"/>
</dbReference>
<comment type="function">
    <text evidence="1">Condenses 4-methyl-5-(beta-hydroxyethyl)thiazole monophosphate (THZ-P) and 2-methyl-4-amino-5-hydroxymethyl pyrimidine pyrophosphate (HMP-PP) to form thiamine monophosphate (TMP).</text>
</comment>
<comment type="catalytic activity">
    <reaction evidence="1">
        <text>2-[(2R,5Z)-2-carboxy-4-methylthiazol-5(2H)-ylidene]ethyl phosphate + 4-amino-2-methyl-5-(diphosphooxymethyl)pyrimidine + 2 H(+) = thiamine phosphate + CO2 + diphosphate</text>
        <dbReference type="Rhea" id="RHEA:47844"/>
        <dbReference type="ChEBI" id="CHEBI:15378"/>
        <dbReference type="ChEBI" id="CHEBI:16526"/>
        <dbReference type="ChEBI" id="CHEBI:33019"/>
        <dbReference type="ChEBI" id="CHEBI:37575"/>
        <dbReference type="ChEBI" id="CHEBI:57841"/>
        <dbReference type="ChEBI" id="CHEBI:62899"/>
        <dbReference type="EC" id="2.5.1.3"/>
    </reaction>
</comment>
<comment type="catalytic activity">
    <reaction evidence="1">
        <text>2-(2-carboxy-4-methylthiazol-5-yl)ethyl phosphate + 4-amino-2-methyl-5-(diphosphooxymethyl)pyrimidine + 2 H(+) = thiamine phosphate + CO2 + diphosphate</text>
        <dbReference type="Rhea" id="RHEA:47848"/>
        <dbReference type="ChEBI" id="CHEBI:15378"/>
        <dbReference type="ChEBI" id="CHEBI:16526"/>
        <dbReference type="ChEBI" id="CHEBI:33019"/>
        <dbReference type="ChEBI" id="CHEBI:37575"/>
        <dbReference type="ChEBI" id="CHEBI:57841"/>
        <dbReference type="ChEBI" id="CHEBI:62890"/>
        <dbReference type="EC" id="2.5.1.3"/>
    </reaction>
</comment>
<comment type="catalytic activity">
    <reaction evidence="1">
        <text>4-methyl-5-(2-phosphooxyethyl)-thiazole + 4-amino-2-methyl-5-(diphosphooxymethyl)pyrimidine + H(+) = thiamine phosphate + diphosphate</text>
        <dbReference type="Rhea" id="RHEA:22328"/>
        <dbReference type="ChEBI" id="CHEBI:15378"/>
        <dbReference type="ChEBI" id="CHEBI:33019"/>
        <dbReference type="ChEBI" id="CHEBI:37575"/>
        <dbReference type="ChEBI" id="CHEBI:57841"/>
        <dbReference type="ChEBI" id="CHEBI:58296"/>
        <dbReference type="EC" id="2.5.1.3"/>
    </reaction>
</comment>
<comment type="cofactor">
    <cofactor evidence="1">
        <name>Mg(2+)</name>
        <dbReference type="ChEBI" id="CHEBI:18420"/>
    </cofactor>
    <text evidence="1">Binds 1 Mg(2+) ion per subunit.</text>
</comment>
<comment type="pathway">
    <text evidence="1">Cofactor biosynthesis; thiamine diphosphate biosynthesis; thiamine phosphate from 4-amino-2-methyl-5-diphosphomethylpyrimidine and 4-methyl-5-(2-phosphoethyl)-thiazole: step 1/1.</text>
</comment>
<comment type="similarity">
    <text evidence="1">Belongs to the thiamine-phosphate synthase family.</text>
</comment>
<reference key="1">
    <citation type="submission" date="2007-03" db="EMBL/GenBank/DDBJ databases">
        <title>Genome sequence of Rhodospirillum centenum.</title>
        <authorList>
            <person name="Touchman J.W."/>
            <person name="Bauer C."/>
            <person name="Blankenship R.E."/>
        </authorList>
    </citation>
    <scope>NUCLEOTIDE SEQUENCE [LARGE SCALE GENOMIC DNA]</scope>
    <source>
        <strain>ATCC 51521 / SW</strain>
    </source>
</reference>
<evidence type="ECO:0000255" key="1">
    <source>
        <dbReference type="HAMAP-Rule" id="MF_00097"/>
    </source>
</evidence>
<gene>
    <name evidence="1" type="primary">thiE</name>
    <name type="ordered locus">RC1_1824</name>
</gene>